<accession>A7IMB0</accession>
<gene>
    <name evidence="1" type="primary">lldD</name>
    <name type="ordered locus">Xaut_3929</name>
</gene>
<keyword id="KW-0997">Cell inner membrane</keyword>
<keyword id="KW-1003">Cell membrane</keyword>
<keyword id="KW-0285">Flavoprotein</keyword>
<keyword id="KW-0288">FMN</keyword>
<keyword id="KW-0472">Membrane</keyword>
<keyword id="KW-0560">Oxidoreductase</keyword>
<keyword id="KW-1185">Reference proteome</keyword>
<comment type="function">
    <text evidence="1">Catalyzes the conversion of L-lactate to pyruvate. Is coupled to the respiratory chain.</text>
</comment>
<comment type="catalytic activity">
    <reaction evidence="1">
        <text>(S)-lactate + A = pyruvate + AH2</text>
        <dbReference type="Rhea" id="RHEA:45816"/>
        <dbReference type="ChEBI" id="CHEBI:13193"/>
        <dbReference type="ChEBI" id="CHEBI:15361"/>
        <dbReference type="ChEBI" id="CHEBI:16651"/>
        <dbReference type="ChEBI" id="CHEBI:17499"/>
    </reaction>
</comment>
<comment type="cofactor">
    <cofactor evidence="1">
        <name>FMN</name>
        <dbReference type="ChEBI" id="CHEBI:58210"/>
    </cofactor>
</comment>
<comment type="subcellular location">
    <subcellularLocation>
        <location evidence="1">Cell inner membrane</location>
        <topology evidence="1">Peripheral membrane protein</topology>
    </subcellularLocation>
</comment>
<comment type="similarity">
    <text evidence="1">Belongs to the FMN-dependent alpha-hydroxy acid dehydrogenase family.</text>
</comment>
<name>LLDD_XANP2</name>
<reference key="1">
    <citation type="submission" date="2007-07" db="EMBL/GenBank/DDBJ databases">
        <title>Complete sequence of chromosome of Xanthobacter autotrophicus Py2.</title>
        <authorList>
            <consortium name="US DOE Joint Genome Institute"/>
            <person name="Copeland A."/>
            <person name="Lucas S."/>
            <person name="Lapidus A."/>
            <person name="Barry K."/>
            <person name="Glavina del Rio T."/>
            <person name="Hammon N."/>
            <person name="Israni S."/>
            <person name="Dalin E."/>
            <person name="Tice H."/>
            <person name="Pitluck S."/>
            <person name="Sims D."/>
            <person name="Brettin T."/>
            <person name="Bruce D."/>
            <person name="Detter J.C."/>
            <person name="Han C."/>
            <person name="Tapia R."/>
            <person name="Brainard J."/>
            <person name="Schmutz J."/>
            <person name="Larimer F."/>
            <person name="Land M."/>
            <person name="Hauser L."/>
            <person name="Kyrpides N."/>
            <person name="Kim E."/>
            <person name="Ensigns S.A."/>
            <person name="Richardson P."/>
        </authorList>
    </citation>
    <scope>NUCLEOTIDE SEQUENCE [LARGE SCALE GENOMIC DNA]</scope>
    <source>
        <strain>ATCC BAA-1158 / Py2</strain>
    </source>
</reference>
<proteinExistence type="inferred from homology"/>
<dbReference type="EC" id="1.1.-.-" evidence="1"/>
<dbReference type="EMBL" id="CP000781">
    <property type="protein sequence ID" value="ABS69153.1"/>
    <property type="molecule type" value="Genomic_DNA"/>
</dbReference>
<dbReference type="SMR" id="A7IMB0"/>
<dbReference type="STRING" id="78245.Xaut_3929"/>
<dbReference type="KEGG" id="xau:Xaut_3929"/>
<dbReference type="eggNOG" id="COG1304">
    <property type="taxonomic scope" value="Bacteria"/>
</dbReference>
<dbReference type="HOGENOM" id="CLU_020639_0_0_5"/>
<dbReference type="OrthoDB" id="9770452at2"/>
<dbReference type="PhylomeDB" id="A7IMB0"/>
<dbReference type="Proteomes" id="UP000002417">
    <property type="component" value="Chromosome"/>
</dbReference>
<dbReference type="GO" id="GO:0005886">
    <property type="term" value="C:plasma membrane"/>
    <property type="evidence" value="ECO:0007669"/>
    <property type="project" value="UniProtKB-SubCell"/>
</dbReference>
<dbReference type="GO" id="GO:0010181">
    <property type="term" value="F:FMN binding"/>
    <property type="evidence" value="ECO:0007669"/>
    <property type="project" value="InterPro"/>
</dbReference>
<dbReference type="GO" id="GO:0004459">
    <property type="term" value="F:L-lactate dehydrogenase activity"/>
    <property type="evidence" value="ECO:0007669"/>
    <property type="project" value="UniProtKB-UniRule"/>
</dbReference>
<dbReference type="GO" id="GO:0009060">
    <property type="term" value="P:aerobic respiration"/>
    <property type="evidence" value="ECO:0007669"/>
    <property type="project" value="TreeGrafter"/>
</dbReference>
<dbReference type="GO" id="GO:0006089">
    <property type="term" value="P:lactate metabolic process"/>
    <property type="evidence" value="ECO:0007669"/>
    <property type="project" value="UniProtKB-UniRule"/>
</dbReference>
<dbReference type="CDD" id="cd02809">
    <property type="entry name" value="alpha_hydroxyacid_oxid_FMN"/>
    <property type="match status" value="1"/>
</dbReference>
<dbReference type="FunFam" id="3.20.20.70:FF:000029">
    <property type="entry name" value="L-lactate dehydrogenase"/>
    <property type="match status" value="1"/>
</dbReference>
<dbReference type="Gene3D" id="3.20.20.70">
    <property type="entry name" value="Aldolase class I"/>
    <property type="match status" value="1"/>
</dbReference>
<dbReference type="HAMAP" id="MF_01559">
    <property type="entry name" value="L_lact_dehydr"/>
    <property type="match status" value="1"/>
</dbReference>
<dbReference type="InterPro" id="IPR013785">
    <property type="entry name" value="Aldolase_TIM"/>
</dbReference>
<dbReference type="InterPro" id="IPR012133">
    <property type="entry name" value="Alpha-hydoxy_acid_DH_FMN"/>
</dbReference>
<dbReference type="InterPro" id="IPR000262">
    <property type="entry name" value="FMN-dep_DH"/>
</dbReference>
<dbReference type="InterPro" id="IPR037396">
    <property type="entry name" value="FMN_HAD"/>
</dbReference>
<dbReference type="InterPro" id="IPR008259">
    <property type="entry name" value="FMN_hydac_DH_AS"/>
</dbReference>
<dbReference type="InterPro" id="IPR020920">
    <property type="entry name" value="LldD"/>
</dbReference>
<dbReference type="NCBIfam" id="NF033901">
    <property type="entry name" value="L_lactate_LldD"/>
    <property type="match status" value="1"/>
</dbReference>
<dbReference type="NCBIfam" id="NF008398">
    <property type="entry name" value="PRK11197.1"/>
    <property type="match status" value="1"/>
</dbReference>
<dbReference type="PANTHER" id="PTHR10578:SF85">
    <property type="entry name" value="L-LACTATE DEHYDROGENASE"/>
    <property type="match status" value="1"/>
</dbReference>
<dbReference type="PANTHER" id="PTHR10578">
    <property type="entry name" value="S -2-HYDROXY-ACID OXIDASE-RELATED"/>
    <property type="match status" value="1"/>
</dbReference>
<dbReference type="Pfam" id="PF01070">
    <property type="entry name" value="FMN_dh"/>
    <property type="match status" value="1"/>
</dbReference>
<dbReference type="PIRSF" id="PIRSF000138">
    <property type="entry name" value="Al-hdrx_acd_dh"/>
    <property type="match status" value="1"/>
</dbReference>
<dbReference type="SUPFAM" id="SSF51395">
    <property type="entry name" value="FMN-linked oxidoreductases"/>
    <property type="match status" value="1"/>
</dbReference>
<dbReference type="PROSITE" id="PS00557">
    <property type="entry name" value="FMN_HYDROXY_ACID_DH_1"/>
    <property type="match status" value="1"/>
</dbReference>
<dbReference type="PROSITE" id="PS51349">
    <property type="entry name" value="FMN_HYDROXY_ACID_DH_2"/>
    <property type="match status" value="1"/>
</dbReference>
<evidence type="ECO:0000255" key="1">
    <source>
        <dbReference type="HAMAP-Rule" id="MF_01559"/>
    </source>
</evidence>
<sequence>MIISSSSDYREAARRRLPPFLFHYIDGGAYAEATLRRNVEDLSDLALRQRVLKSVGEVDLSTTLLKQQLSMPVGLAPVGLTGMYARRGEVQAAQAATQKGIPFTLSTVSVCSIEEVQSQVGKPIWFQLYVLKDRGFMKNALERAWAAGIRTLVFTVDMPVPGARYRDAHSGMSGPNAAFRRMVQAVLHPFWAYDVGLMGTPHDLGNVSAYRKEKTSLEDYVGWLGNNFDPSIGWKDLEWIREFWKGPMVIKGILDPEDARDAVRFGADGIIVSNHGGRQLDGVLSSARAMPAIADAVKGEMTLLADSGIRSGLDVVRMLAQGADGVLLGRAFVYALAAAGRAGVENLLDIIAKEMRVAMTLTGARAISDISRDSLVREIERPLARAAQ</sequence>
<protein>
    <recommendedName>
        <fullName evidence="1">L-lactate dehydrogenase</fullName>
        <ecNumber evidence="1">1.1.-.-</ecNumber>
    </recommendedName>
</protein>
<organism>
    <name type="scientific">Xanthobacter autotrophicus (strain ATCC BAA-1158 / Py2)</name>
    <dbReference type="NCBI Taxonomy" id="78245"/>
    <lineage>
        <taxon>Bacteria</taxon>
        <taxon>Pseudomonadati</taxon>
        <taxon>Pseudomonadota</taxon>
        <taxon>Alphaproteobacteria</taxon>
        <taxon>Hyphomicrobiales</taxon>
        <taxon>Xanthobacteraceae</taxon>
        <taxon>Xanthobacter</taxon>
    </lineage>
</organism>
<feature type="chain" id="PRO_0000383452" description="L-lactate dehydrogenase">
    <location>
        <begin position="1"/>
        <end position="388"/>
    </location>
</feature>
<feature type="domain" description="FMN hydroxy acid dehydrogenase" evidence="1">
    <location>
        <begin position="1"/>
        <end position="380"/>
    </location>
</feature>
<feature type="active site" description="Proton acceptor" evidence="1">
    <location>
        <position position="275"/>
    </location>
</feature>
<feature type="binding site" evidence="1">
    <location>
        <position position="24"/>
    </location>
    <ligand>
        <name>substrate</name>
    </ligand>
</feature>
<feature type="binding site" evidence="1">
    <location>
        <position position="106"/>
    </location>
    <ligand>
        <name>FMN</name>
        <dbReference type="ChEBI" id="CHEBI:58210"/>
    </ligand>
</feature>
<feature type="binding site" evidence="1">
    <location>
        <position position="127"/>
    </location>
    <ligand>
        <name>FMN</name>
        <dbReference type="ChEBI" id="CHEBI:58210"/>
    </ligand>
</feature>
<feature type="binding site" evidence="1">
    <location>
        <position position="129"/>
    </location>
    <ligand>
        <name>substrate</name>
    </ligand>
</feature>
<feature type="binding site" evidence="1">
    <location>
        <position position="155"/>
    </location>
    <ligand>
        <name>FMN</name>
        <dbReference type="ChEBI" id="CHEBI:58210"/>
    </ligand>
</feature>
<feature type="binding site" evidence="1">
    <location>
        <position position="164"/>
    </location>
    <ligand>
        <name>substrate</name>
    </ligand>
</feature>
<feature type="binding site" evidence="1">
    <location>
        <position position="251"/>
    </location>
    <ligand>
        <name>FMN</name>
        <dbReference type="ChEBI" id="CHEBI:58210"/>
    </ligand>
</feature>
<feature type="binding site" evidence="1">
    <location>
        <position position="278"/>
    </location>
    <ligand>
        <name>substrate</name>
    </ligand>
</feature>
<feature type="binding site" evidence="1">
    <location>
        <begin position="306"/>
        <end position="330"/>
    </location>
    <ligand>
        <name>FMN</name>
        <dbReference type="ChEBI" id="CHEBI:58210"/>
    </ligand>
</feature>